<protein>
    <recommendedName>
        <fullName evidence="1">DNA-directed RNA polymerase subunit beta'</fullName>
        <shortName evidence="1">RNAP subunit beta'</shortName>
        <ecNumber evidence="1">2.7.7.6</ecNumber>
    </recommendedName>
    <alternativeName>
        <fullName evidence="1">RNA polymerase subunit beta'</fullName>
    </alternativeName>
    <alternativeName>
        <fullName evidence="1">Transcriptase subunit beta'</fullName>
    </alternativeName>
</protein>
<keyword id="KW-0240">DNA-directed RNA polymerase</keyword>
<keyword id="KW-0479">Metal-binding</keyword>
<keyword id="KW-0548">Nucleotidyltransferase</keyword>
<keyword id="KW-1185">Reference proteome</keyword>
<keyword id="KW-0804">Transcription</keyword>
<keyword id="KW-0808">Transferase</keyword>
<keyword id="KW-0862">Zinc</keyword>
<sequence>MTSTSPKSRKSSSKRKGSKKKAARSKNVIPPLSKTPPSFRNCVVDKKSLKQLVAWAFKNHGTAVTAAMADNLKDLGFKYATQAAVSISVDDLKVPEAKQDLLGQAEEQITATEECYRLGEITEVERHTKVIDTWTETNERLVDAVKKNFNHNDPLNSVWMMANSGARGNMSQVRQLVGMRGLMANPQGEIIDLPIRTNFREGLTVTEYVISSYGARKGLVDTALRTADSGYLTRRLVDVAQDVIVREEDCGTTRAILINAEDGRFGNRLVGRLVAEDIVDQEDAVIAKRDTAIDPELSKKIEKANVNGVMIRSPLTCEATRSVCRKCYGWALAHNQLVDLGEAVGIIAAQSIGEPGTQLTMRTFHTGGVSTAETGVVRSNLAGKVEFGPKARVRGYRTPHGVEAQQAEVDFLLHIKPTEKGKGQKVEISSGSLIFVEDGQEVDADVTLAQIAAGAIKKSVEKATKDVICDLAGQVRYEEAIQPKEVTDRQGNITLKAQRLGRLWVLAGDVYNLPPNAKPVIASNANVQAGKVLAEASQSSEFGGEVRLRDSIGDSREVQIVTTSMTLKDYNLLEESNHSGEIWNLEANDGTRYRINSIPGSKIGNNEVIAELSDDRFRTKTGGLVKYAPGLAIKKARSAKNGFEVSNGGSLLWIPQETHEINKDISLLMIQDRQWIEAGTEVVKDIFSQTAGIVTVTQKNDILREIIVRSGEFHLCTDSNILERFDNEGQIVNPGETIAKGIKPEAMVFVQTIETTEGKGVLLRPVEEYTIPDKAQLPELSHVTQQQGPSLGLKATQRLGYKDGELIKSVEGVELLKTQLILETFDTTPQMTVDVEVTEDQSTKTIQRLRLVILESILVRRDTISDSSHGSTHTELQVKDQQIVKAGDIVATTQILCKEKGIVQLPEMKEDEPIRRLIVERQEDTVTLTAASKPVVKIGQRVIDGDLLSNEEPINCCGEIEAIKENKVTLRLGRPYMVSPDSVLHVKNGDLVQRGDGLALLVFERQKTGDIVQGLPRIEELLEARRPRDSAILCKRRGIVEINQGDDDDSVVVKVIESDDLIEEYPILLGKNVMISDGQEVKAGELLTDGPVNPHELLECFFGDLRDRKPLMEAAQEAIAKLQHRLVTEVQNVYKSQGVAIDDKHIEVIVRQMTSKVRIEDAGDTTLLPGELIEIRQVEDTNQAISITGGAPAEFTPVLLGITKASLNTDSFISAASFQETTRVLTEAAIEGKSDWLRGLKENVIIGRLIPAGTGFSGFVEELRAEAGPHPDILAEDPAGYRRIQNLRPDYTVEMPSSPAAANLTSVLDDPSDADLEATRNRHGIDPSTSNFAAFARPSGDDNFQEDQSPDPAALEGLQEEGLLSDE</sequence>
<feature type="chain" id="PRO_0000067905" description="DNA-directed RNA polymerase subunit beta'">
    <location>
        <begin position="1"/>
        <end position="1367"/>
    </location>
</feature>
<feature type="region of interest" description="Disordered" evidence="2">
    <location>
        <begin position="1"/>
        <end position="34"/>
    </location>
</feature>
<feature type="region of interest" description="Disordered" evidence="2">
    <location>
        <begin position="1306"/>
        <end position="1367"/>
    </location>
</feature>
<feature type="compositionally biased region" description="Basic residues" evidence="2">
    <location>
        <begin position="7"/>
        <end position="24"/>
    </location>
</feature>
<feature type="compositionally biased region" description="Low complexity" evidence="2">
    <location>
        <begin position="1355"/>
        <end position="1367"/>
    </location>
</feature>
<feature type="binding site" evidence="1">
    <location>
        <position position="250"/>
    </location>
    <ligand>
        <name>Zn(2+)</name>
        <dbReference type="ChEBI" id="CHEBI:29105"/>
    </ligand>
</feature>
<feature type="binding site" evidence="1">
    <location>
        <position position="317"/>
    </location>
    <ligand>
        <name>Zn(2+)</name>
        <dbReference type="ChEBI" id="CHEBI:29105"/>
    </ligand>
</feature>
<feature type="binding site" evidence="1">
    <location>
        <position position="324"/>
    </location>
    <ligand>
        <name>Zn(2+)</name>
        <dbReference type="ChEBI" id="CHEBI:29105"/>
    </ligand>
</feature>
<feature type="binding site" evidence="1">
    <location>
        <position position="327"/>
    </location>
    <ligand>
        <name>Zn(2+)</name>
        <dbReference type="ChEBI" id="CHEBI:29105"/>
    </ligand>
</feature>
<reference key="1">
    <citation type="journal article" date="2003" name="Proc. Natl. Acad. Sci. U.S.A.">
        <title>Genome sequence of the cyanobacterium Prochlorococcus marinus SS120, a nearly minimal oxyphototrophic genome.</title>
        <authorList>
            <person name="Dufresne A."/>
            <person name="Salanoubat M."/>
            <person name="Partensky F."/>
            <person name="Artiguenave F."/>
            <person name="Axmann I.M."/>
            <person name="Barbe V."/>
            <person name="Duprat S."/>
            <person name="Galperin M.Y."/>
            <person name="Koonin E.V."/>
            <person name="Le Gall F."/>
            <person name="Makarova K.S."/>
            <person name="Ostrowski M."/>
            <person name="Oztas S."/>
            <person name="Robert C."/>
            <person name="Rogozin I.B."/>
            <person name="Scanlan D.J."/>
            <person name="Tandeau de Marsac N."/>
            <person name="Weissenbach J."/>
            <person name="Wincker P."/>
            <person name="Wolf Y.I."/>
            <person name="Hess W.R."/>
        </authorList>
    </citation>
    <scope>NUCLEOTIDE SEQUENCE [LARGE SCALE GENOMIC DNA]</scope>
    <source>
        <strain>SARG / CCMP1375 / SS120</strain>
    </source>
</reference>
<name>RPOC2_PROMA</name>
<organism>
    <name type="scientific">Prochlorococcus marinus (strain SARG / CCMP1375 / SS120)</name>
    <dbReference type="NCBI Taxonomy" id="167539"/>
    <lineage>
        <taxon>Bacteria</taxon>
        <taxon>Bacillati</taxon>
        <taxon>Cyanobacteriota</taxon>
        <taxon>Cyanophyceae</taxon>
        <taxon>Synechococcales</taxon>
        <taxon>Prochlorococcaceae</taxon>
        <taxon>Prochlorococcus</taxon>
    </lineage>
</organism>
<comment type="function">
    <text evidence="1">DNA-dependent RNA polymerase catalyzes the transcription of DNA into RNA using the four ribonucleoside triphosphates as substrates.</text>
</comment>
<comment type="catalytic activity">
    <reaction evidence="1">
        <text>RNA(n) + a ribonucleoside 5'-triphosphate = RNA(n+1) + diphosphate</text>
        <dbReference type="Rhea" id="RHEA:21248"/>
        <dbReference type="Rhea" id="RHEA-COMP:14527"/>
        <dbReference type="Rhea" id="RHEA-COMP:17342"/>
        <dbReference type="ChEBI" id="CHEBI:33019"/>
        <dbReference type="ChEBI" id="CHEBI:61557"/>
        <dbReference type="ChEBI" id="CHEBI:140395"/>
        <dbReference type="EC" id="2.7.7.6"/>
    </reaction>
</comment>
<comment type="cofactor">
    <cofactor evidence="1">
        <name>Zn(2+)</name>
        <dbReference type="ChEBI" id="CHEBI:29105"/>
    </cofactor>
    <text evidence="1">Binds 1 Zn(2+) ion per subunit.</text>
</comment>
<comment type="subunit">
    <text evidence="1">In cyanobacteria the RNAP catalytic core is composed of 2 alpha, 1 beta, 1 beta', 1 gamma and 1 omega subunit. When a sigma factor is associated with the core the holoenzyme is formed, which can initiate transcription.</text>
</comment>
<comment type="similarity">
    <text evidence="1">Belongs to the RNA polymerase beta' chain family. RpoC2 subfamily.</text>
</comment>
<dbReference type="EC" id="2.7.7.6" evidence="1"/>
<dbReference type="EMBL" id="AE017126">
    <property type="protein sequence ID" value="AAQ00682.1"/>
    <property type="molecule type" value="Genomic_DNA"/>
</dbReference>
<dbReference type="RefSeq" id="NP_876029.1">
    <property type="nucleotide sequence ID" value="NC_005042.1"/>
</dbReference>
<dbReference type="RefSeq" id="WP_011125788.1">
    <property type="nucleotide sequence ID" value="NC_005042.1"/>
</dbReference>
<dbReference type="SMR" id="Q7VA30"/>
<dbReference type="STRING" id="167539.Pro_1638"/>
<dbReference type="EnsemblBacteria" id="AAQ00682">
    <property type="protein sequence ID" value="AAQ00682"/>
    <property type="gene ID" value="Pro_1638"/>
</dbReference>
<dbReference type="KEGG" id="pma:Pro_1638"/>
<dbReference type="PATRIC" id="fig|167539.5.peg.1732"/>
<dbReference type="eggNOG" id="COG0086">
    <property type="taxonomic scope" value="Bacteria"/>
</dbReference>
<dbReference type="HOGENOM" id="CLU_000524_1_0_3"/>
<dbReference type="OrthoDB" id="9815296at2"/>
<dbReference type="Proteomes" id="UP000001420">
    <property type="component" value="Chromosome"/>
</dbReference>
<dbReference type="GO" id="GO:0000428">
    <property type="term" value="C:DNA-directed RNA polymerase complex"/>
    <property type="evidence" value="ECO:0007669"/>
    <property type="project" value="UniProtKB-KW"/>
</dbReference>
<dbReference type="GO" id="GO:0003677">
    <property type="term" value="F:DNA binding"/>
    <property type="evidence" value="ECO:0007669"/>
    <property type="project" value="UniProtKB-UniRule"/>
</dbReference>
<dbReference type="GO" id="GO:0003899">
    <property type="term" value="F:DNA-directed RNA polymerase activity"/>
    <property type="evidence" value="ECO:0007669"/>
    <property type="project" value="UniProtKB-UniRule"/>
</dbReference>
<dbReference type="GO" id="GO:0008270">
    <property type="term" value="F:zinc ion binding"/>
    <property type="evidence" value="ECO:0007669"/>
    <property type="project" value="UniProtKB-UniRule"/>
</dbReference>
<dbReference type="GO" id="GO:0006351">
    <property type="term" value="P:DNA-templated transcription"/>
    <property type="evidence" value="ECO:0007669"/>
    <property type="project" value="UniProtKB-UniRule"/>
</dbReference>
<dbReference type="CDD" id="cd02655">
    <property type="entry name" value="RNAP_beta'_C"/>
    <property type="match status" value="1"/>
</dbReference>
<dbReference type="FunFam" id="1.10.150.390:FF:000002">
    <property type="entry name" value="DNA-directed RNA polymerase subunit beta"/>
    <property type="match status" value="1"/>
</dbReference>
<dbReference type="Gene3D" id="1.10.132.30">
    <property type="match status" value="1"/>
</dbReference>
<dbReference type="Gene3D" id="1.10.150.390">
    <property type="match status" value="1"/>
</dbReference>
<dbReference type="Gene3D" id="1.10.1790.20">
    <property type="match status" value="1"/>
</dbReference>
<dbReference type="Gene3D" id="2.40.50.100">
    <property type="match status" value="1"/>
</dbReference>
<dbReference type="Gene3D" id="1.10.274.100">
    <property type="entry name" value="RNA polymerase Rpb1, domain 3"/>
    <property type="match status" value="1"/>
</dbReference>
<dbReference type="HAMAP" id="MF_01324">
    <property type="entry name" value="RNApol_bact_RpoC2"/>
    <property type="match status" value="1"/>
</dbReference>
<dbReference type="InterPro" id="IPR012756">
    <property type="entry name" value="DNA-dir_RpoC2_beta_pp"/>
</dbReference>
<dbReference type="InterPro" id="IPR045867">
    <property type="entry name" value="DNA-dir_RpoC_beta_prime"/>
</dbReference>
<dbReference type="InterPro" id="IPR007066">
    <property type="entry name" value="RNA_pol_Rpb1_3"/>
</dbReference>
<dbReference type="InterPro" id="IPR042102">
    <property type="entry name" value="RNA_pol_Rpb1_3_sf"/>
</dbReference>
<dbReference type="InterPro" id="IPR007083">
    <property type="entry name" value="RNA_pol_Rpb1_4"/>
</dbReference>
<dbReference type="InterPro" id="IPR007081">
    <property type="entry name" value="RNA_pol_Rpb1_5"/>
</dbReference>
<dbReference type="InterPro" id="IPR038120">
    <property type="entry name" value="Rpb1_funnel_sf"/>
</dbReference>
<dbReference type="NCBIfam" id="NF002724">
    <property type="entry name" value="PRK02597.1"/>
    <property type="match status" value="1"/>
</dbReference>
<dbReference type="NCBIfam" id="TIGR02388">
    <property type="entry name" value="rpoC2_cyan"/>
    <property type="match status" value="1"/>
</dbReference>
<dbReference type="PANTHER" id="PTHR19376">
    <property type="entry name" value="DNA-DIRECTED RNA POLYMERASE"/>
    <property type="match status" value="1"/>
</dbReference>
<dbReference type="PANTHER" id="PTHR19376:SF54">
    <property type="entry name" value="DNA-DIRECTED RNA POLYMERASE SUBUNIT BETA"/>
    <property type="match status" value="1"/>
</dbReference>
<dbReference type="Pfam" id="PF04983">
    <property type="entry name" value="RNA_pol_Rpb1_3"/>
    <property type="match status" value="1"/>
</dbReference>
<dbReference type="Pfam" id="PF05000">
    <property type="entry name" value="RNA_pol_Rpb1_4"/>
    <property type="match status" value="1"/>
</dbReference>
<dbReference type="Pfam" id="PF04998">
    <property type="entry name" value="RNA_pol_Rpb1_5"/>
    <property type="match status" value="1"/>
</dbReference>
<dbReference type="SUPFAM" id="SSF64484">
    <property type="entry name" value="beta and beta-prime subunits of DNA dependent RNA-polymerase"/>
    <property type="match status" value="1"/>
</dbReference>
<accession>Q7VA30</accession>
<gene>
    <name evidence="1" type="primary">rpoC2</name>
    <name type="synonym">rpoC</name>
    <name type="ordered locus">Pro_1638</name>
</gene>
<evidence type="ECO:0000255" key="1">
    <source>
        <dbReference type="HAMAP-Rule" id="MF_01324"/>
    </source>
</evidence>
<evidence type="ECO:0000256" key="2">
    <source>
        <dbReference type="SAM" id="MobiDB-lite"/>
    </source>
</evidence>
<proteinExistence type="inferred from homology"/>